<organism>
    <name type="scientific">Gallus gallus</name>
    <name type="common">Chicken</name>
    <dbReference type="NCBI Taxonomy" id="9031"/>
    <lineage>
        <taxon>Eukaryota</taxon>
        <taxon>Metazoa</taxon>
        <taxon>Chordata</taxon>
        <taxon>Craniata</taxon>
        <taxon>Vertebrata</taxon>
        <taxon>Euteleostomi</taxon>
        <taxon>Archelosauria</taxon>
        <taxon>Archosauria</taxon>
        <taxon>Dinosauria</taxon>
        <taxon>Saurischia</taxon>
        <taxon>Theropoda</taxon>
        <taxon>Coelurosauria</taxon>
        <taxon>Aves</taxon>
        <taxon>Neognathae</taxon>
        <taxon>Galloanserae</taxon>
        <taxon>Galliformes</taxon>
        <taxon>Phasianidae</taxon>
        <taxon>Phasianinae</taxon>
        <taxon>Gallus</taxon>
    </lineage>
</organism>
<evidence type="ECO:0000250" key="1"/>
<evidence type="ECO:0000250" key="2">
    <source>
        <dbReference type="UniProtKB" id="P05198"/>
    </source>
</evidence>
<evidence type="ECO:0000250" key="3">
    <source>
        <dbReference type="UniProtKB" id="P56286"/>
    </source>
</evidence>
<evidence type="ECO:0000250" key="4">
    <source>
        <dbReference type="UniProtKB" id="P83268"/>
    </source>
</evidence>
<evidence type="ECO:0000250" key="5">
    <source>
        <dbReference type="UniProtKB" id="Q6ZWX6"/>
    </source>
</evidence>
<evidence type="ECO:0000255" key="6">
    <source>
        <dbReference type="PROSITE-ProRule" id="PRU00180"/>
    </source>
</evidence>
<evidence type="ECO:0000256" key="7">
    <source>
        <dbReference type="SAM" id="MobiDB-lite"/>
    </source>
</evidence>
<evidence type="ECO:0000305" key="8"/>
<proteinExistence type="evidence at transcript level"/>
<name>IF2A_CHICK</name>
<sequence>MPALSCRFYQHKFPEVEDVVMVNVRSIAEMGAYVSLLEYNNIEGMILLSELSRRRIRSINKLIRIGRNECVVVIRVDKEKGYIDLSKRRVSPEEAIKCEDKFTKSKTVYSILRHVAEVLEYTKDEQLESLFQRTAWVFDDKYKRPGYGAYDAFKHAVSDPAILDSLDLTEEERRVLIDNINRRLTPQAVKIRADIEVACYGYEGIDAVKEALRAGLNCSTENMPIKINLIAPPRYVMTTTTLERTEGLSVLNQAMAVIKEKIEEKRGVFNVQMEPKVVTDTDETELARQLERLERENAEVDGDDDAEEMEAKTED</sequence>
<reference key="1">
    <citation type="journal article" date="2002" name="Curr. Biol.">
        <title>A comprehensive collection of chicken cDNAs.</title>
        <authorList>
            <person name="Boardman P.E."/>
            <person name="Sanz-Ezquerro J."/>
            <person name="Overton I.M."/>
            <person name="Burt D.W."/>
            <person name="Bosch E."/>
            <person name="Fong W.T."/>
            <person name="Tickle C."/>
            <person name="Brown W.R."/>
            <person name="Wilson S.A."/>
            <person name="Hubbard S.J."/>
        </authorList>
    </citation>
    <scope>NUCLEOTIDE SEQUENCE [LARGE SCALE MRNA]</scope>
    <source>
        <strain>White leghorn</strain>
        <tissue>Trunk</tissue>
    </source>
</reference>
<reference key="2">
    <citation type="journal article" date="2005" name="Genome Biol.">
        <title>Full-length cDNAs from chicken bursal lymphocytes to facilitate gene function analysis.</title>
        <authorList>
            <person name="Caldwell R.B."/>
            <person name="Kierzek A.M."/>
            <person name="Arakawa H."/>
            <person name="Bezzubov Y."/>
            <person name="Zaim J."/>
            <person name="Fiedler P."/>
            <person name="Kutter S."/>
            <person name="Blagodatski A."/>
            <person name="Kostovska D."/>
            <person name="Koter M."/>
            <person name="Plachy J."/>
            <person name="Carninci P."/>
            <person name="Hayashizaki Y."/>
            <person name="Buerstedde J.-M."/>
        </authorList>
    </citation>
    <scope>NUCLEOTIDE SEQUENCE [LARGE SCALE MRNA]</scope>
    <source>
        <strain>CB</strain>
        <tissue>Bursa of Fabricius</tissue>
    </source>
</reference>
<keyword id="KW-0963">Cytoplasm</keyword>
<keyword id="KW-0396">Initiation factor</keyword>
<keyword id="KW-0597">Phosphoprotein</keyword>
<keyword id="KW-0648">Protein biosynthesis</keyword>
<keyword id="KW-1185">Reference proteome</keyword>
<keyword id="KW-0694">RNA-binding</keyword>
<keyword id="KW-0810">Translation regulation</keyword>
<accession>Q5ZLX2</accession>
<feature type="initiator methionine" description="Removed" evidence="1">
    <location>
        <position position="1"/>
    </location>
</feature>
<feature type="chain" id="PRO_0000331242" description="Eukaryotic translation initiation factor 2 subunit 1">
    <location>
        <begin position="2"/>
        <end position="315"/>
    </location>
</feature>
<feature type="domain" description="S1 motif" evidence="6">
    <location>
        <begin position="17"/>
        <end position="88"/>
    </location>
</feature>
<feature type="region of interest" description="Disordered" evidence="7">
    <location>
        <begin position="292"/>
        <end position="315"/>
    </location>
</feature>
<feature type="compositionally biased region" description="Acidic residues" evidence="7">
    <location>
        <begin position="299"/>
        <end position="308"/>
    </location>
</feature>
<feature type="modified residue" description="Phosphoserine" evidence="4">
    <location>
        <position position="49"/>
    </location>
</feature>
<feature type="modified residue" description="Phosphoserine" evidence="5">
    <location>
        <position position="52"/>
    </location>
</feature>
<feature type="sequence conflict" description="In Ref. 2; CAG31271." evidence="8" ref="2">
    <location>
        <position position="289"/>
    </location>
</feature>
<protein>
    <recommendedName>
        <fullName>Eukaryotic translation initiation factor 2 subunit 1</fullName>
    </recommendedName>
    <alternativeName>
        <fullName>Eukaryotic translation initiation factor 2 subunit alpha</fullName>
        <shortName>eIF-2-alpha</shortName>
        <shortName>eIF-2A</shortName>
        <shortName>eIF-2alpha</shortName>
        <shortName>eIF2-alpha</shortName>
    </alternativeName>
</protein>
<gene>
    <name type="primary">EIF2S1</name>
    <name type="synonym">EIF2A</name>
    <name type="ORF">RCJMB04_4i21</name>
</gene>
<comment type="function">
    <text evidence="2">Member of the eIF2 complex that functions in the early steps of protein synthesis by forming a ternary complex with GTP and initiator tRNA. This complex binds to a 40S ribosomal subunit, followed by mRNA binding to form a 43S pre-initiation complex. Junction of the 60S ribosomal subunit to form the 80S initiation complex is preceded by hydrolysis of the GTP bound to eIF2 and release of an eIF2-GDP binary complex. In order for eIF2 to recycle and catalyze another round of initiation, the GDP bound to eIF2 must exchange with GTP by way of a reaction catalyzed by eIF2B. EIF2S1/eIF2-alpha is a key component of the integrated stress response (ISR), required for adaptation to various stress: phosphorylation by metabolic-stress sensing protein kinases (EIF2AK1/HRI, EIF2AK2/PKR, EIF2AK3/PERK and EIF2AK4/GCN2) in response to stress converts EIF2S1/eIF2-alpha in a global protein synthesis inhibitor, leading to a attenuation of cap-dependent translation, while concomitantly initiating the preferential translation of ISR-specific mRNAs, such as the transcriptional activators ATF4 and QRICH1.</text>
</comment>
<comment type="activity regulation">
    <text evidence="2">Activity is regulated by phosphorylation at Ser-49 and Ser-52, which stabilizes the eIF2/GDP/eIF2B complex and prevents the eIF2B-mediated exchange of GDP for GTP, thereby preventing the formation of the 43S pre-initiation complex (43S PIC). This results in the global attenuation of 5' cap-dependent protein synthesis and concomitant translation of ISR-specific mRNAs that contain a short upstream open reading frame (uORF) in their 5' UTR.</text>
</comment>
<comment type="subunit">
    <text evidence="2">Eukaryotic translation initiation factor 2 eIF2 is a heterotrimeric complex composed of an alpha (EIF2S1), a beta (EIF2S2) and a gamma (EIF2S3) chain.</text>
</comment>
<comment type="subcellular location">
    <subcellularLocation>
        <location evidence="5">Cytoplasm</location>
        <location evidence="5">Stress granule</location>
    </subcellularLocation>
    <subcellularLocation>
        <location evidence="3">Cytoplasm</location>
        <location evidence="3">Cytosol</location>
    </subcellularLocation>
</comment>
<comment type="PTM">
    <text evidence="2">Phosphorylation at Ser-49 and Ser-52 stabilizes the eIF-2/GDP/eIF2B complex and prevents GDP/GTP exchange reaction, thus impairing the recycling of eIF-2 between successive rounds of initiation and leading to global inhibition of translation, while concomitantly initiating the preferential translation of integrated stress response (ISR)-specific mRNAs.</text>
</comment>
<comment type="similarity">
    <text evidence="8">Belongs to the eIF-2-alpha family.</text>
</comment>
<comment type="sequence caution" evidence="8">
    <conflict type="erroneous termination">
        <sequence resource="EMBL-CDS" id="CAG31271"/>
    </conflict>
    <text>Truncated C-terminus.</text>
</comment>
<dbReference type="EMBL" id="BU385483">
    <property type="status" value="NOT_ANNOTATED_CDS"/>
    <property type="molecule type" value="mRNA"/>
</dbReference>
<dbReference type="EMBL" id="AJ719612">
    <property type="protein sequence ID" value="CAG31271.1"/>
    <property type="status" value="ALT_SEQ"/>
    <property type="molecule type" value="mRNA"/>
</dbReference>
<dbReference type="RefSeq" id="NP_001006477.1">
    <property type="nucleotide sequence ID" value="NM_001006477.1"/>
</dbReference>
<dbReference type="RefSeq" id="NP_001384104.1">
    <property type="nucleotide sequence ID" value="NM_001397175.1"/>
</dbReference>
<dbReference type="SMR" id="Q5ZLX2"/>
<dbReference type="FunCoup" id="Q5ZLX2">
    <property type="interactions" value="2746"/>
</dbReference>
<dbReference type="STRING" id="9031.ENSGALP00000047783"/>
<dbReference type="PaxDb" id="9031-ENSGALP00000015560"/>
<dbReference type="GeneID" id="423279"/>
<dbReference type="KEGG" id="gga:423279"/>
<dbReference type="CTD" id="1965"/>
<dbReference type="VEuPathDB" id="HostDB:geneid_423279"/>
<dbReference type="eggNOG" id="KOG2916">
    <property type="taxonomic scope" value="Eukaryota"/>
</dbReference>
<dbReference type="HOGENOM" id="CLU_033458_0_0_1"/>
<dbReference type="InParanoid" id="Q5ZLX2"/>
<dbReference type="OMA" id="DVNEHQR"/>
<dbReference type="OrthoDB" id="1685042at2759"/>
<dbReference type="PhylomeDB" id="Q5ZLX2"/>
<dbReference type="TreeFam" id="TF101502"/>
<dbReference type="Reactome" id="R-GGA-381042">
    <property type="pathway name" value="PERK regulates gene expression"/>
</dbReference>
<dbReference type="Reactome" id="R-GGA-72649">
    <property type="pathway name" value="Translation initiation complex formation"/>
</dbReference>
<dbReference type="Reactome" id="R-GGA-72695">
    <property type="pathway name" value="Formation of the ternary complex, and subsequently, the 43S complex"/>
</dbReference>
<dbReference type="Reactome" id="R-GGA-72702">
    <property type="pathway name" value="Ribosomal scanning and start codon recognition"/>
</dbReference>
<dbReference type="Reactome" id="R-GGA-72731">
    <property type="pathway name" value="Recycling of eIF2:GDP"/>
</dbReference>
<dbReference type="Reactome" id="R-GGA-9840373">
    <property type="pathway name" value="Cellular response to mitochondrial stress"/>
</dbReference>
<dbReference type="PRO" id="PR:Q5ZLX2"/>
<dbReference type="Proteomes" id="UP000000539">
    <property type="component" value="Chromosome 5"/>
</dbReference>
<dbReference type="Bgee" id="ENSGALG00000009565">
    <property type="expression patterns" value="Expressed in spermatid and 14 other cell types or tissues"/>
</dbReference>
<dbReference type="GO" id="GO:0005737">
    <property type="term" value="C:cytoplasm"/>
    <property type="evidence" value="ECO:0000250"/>
    <property type="project" value="AgBase"/>
</dbReference>
<dbReference type="GO" id="GO:0010494">
    <property type="term" value="C:cytoplasmic stress granule"/>
    <property type="evidence" value="ECO:0007669"/>
    <property type="project" value="UniProtKB-SubCell"/>
</dbReference>
<dbReference type="GO" id="GO:0005829">
    <property type="term" value="C:cytosol"/>
    <property type="evidence" value="ECO:0007669"/>
    <property type="project" value="UniProtKB-SubCell"/>
</dbReference>
<dbReference type="GO" id="GO:0033290">
    <property type="term" value="C:eukaryotic 48S preinitiation complex"/>
    <property type="evidence" value="ECO:0000318"/>
    <property type="project" value="GO_Central"/>
</dbReference>
<dbReference type="GO" id="GO:0005850">
    <property type="term" value="C:eukaryotic translation initiation factor 2 complex"/>
    <property type="evidence" value="ECO:0000250"/>
    <property type="project" value="UniProtKB"/>
</dbReference>
<dbReference type="GO" id="GO:0043022">
    <property type="term" value="F:ribosome binding"/>
    <property type="evidence" value="ECO:0000318"/>
    <property type="project" value="GO_Central"/>
</dbReference>
<dbReference type="GO" id="GO:0003723">
    <property type="term" value="F:RNA binding"/>
    <property type="evidence" value="ECO:0007669"/>
    <property type="project" value="UniProtKB-KW"/>
</dbReference>
<dbReference type="GO" id="GO:0003743">
    <property type="term" value="F:translation initiation factor activity"/>
    <property type="evidence" value="ECO:0000318"/>
    <property type="project" value="GO_Central"/>
</dbReference>
<dbReference type="GO" id="GO:0034198">
    <property type="term" value="P:cellular response to amino acid starvation"/>
    <property type="evidence" value="ECO:0000250"/>
    <property type="project" value="UniProtKB"/>
</dbReference>
<dbReference type="GO" id="GO:0034644">
    <property type="term" value="P:cellular response to UV"/>
    <property type="evidence" value="ECO:0000250"/>
    <property type="project" value="UniProtKB"/>
</dbReference>
<dbReference type="GO" id="GO:0032057">
    <property type="term" value="P:negative regulation of translational initiation in response to stress"/>
    <property type="evidence" value="ECO:0000250"/>
    <property type="project" value="UniProtKB"/>
</dbReference>
<dbReference type="GO" id="GO:0036499">
    <property type="term" value="P:PERK-mediated unfolded protein response"/>
    <property type="evidence" value="ECO:0000250"/>
    <property type="project" value="UniProtKB"/>
</dbReference>
<dbReference type="GO" id="GO:0034976">
    <property type="term" value="P:response to endoplasmic reticulum stress"/>
    <property type="evidence" value="ECO:0000250"/>
    <property type="project" value="UniProtKB"/>
</dbReference>
<dbReference type="GO" id="GO:0006413">
    <property type="term" value="P:translational initiation"/>
    <property type="evidence" value="ECO:0000318"/>
    <property type="project" value="GO_Central"/>
</dbReference>
<dbReference type="CDD" id="cd04452">
    <property type="entry name" value="S1_IF2_alpha"/>
    <property type="match status" value="1"/>
</dbReference>
<dbReference type="FunFam" id="1.10.150.190:FF:000001">
    <property type="entry name" value="Eukaryotic translation initiation factor 2 subunit 1"/>
    <property type="match status" value="1"/>
</dbReference>
<dbReference type="FunFam" id="2.40.50.140:FF:000795">
    <property type="entry name" value="Eukaryotic translation initiation factor 2 subunit 1"/>
    <property type="match status" value="1"/>
</dbReference>
<dbReference type="FunFam" id="3.30.70.1130:FF:000001">
    <property type="entry name" value="Eukaryotic translation initiation factor 2 subunit 1"/>
    <property type="match status" value="1"/>
</dbReference>
<dbReference type="Gene3D" id="3.30.70.1130">
    <property type="entry name" value="EIF_2_alpha"/>
    <property type="match status" value="1"/>
</dbReference>
<dbReference type="Gene3D" id="2.40.50.140">
    <property type="entry name" value="Nucleic acid-binding proteins"/>
    <property type="match status" value="1"/>
</dbReference>
<dbReference type="Gene3D" id="1.10.150.190">
    <property type="entry name" value="Translation initiation factor 2, subunit 1, domain 2"/>
    <property type="match status" value="1"/>
</dbReference>
<dbReference type="InterPro" id="IPR012340">
    <property type="entry name" value="NA-bd_OB-fold"/>
</dbReference>
<dbReference type="InterPro" id="IPR003029">
    <property type="entry name" value="S1_domain"/>
</dbReference>
<dbReference type="InterPro" id="IPR044126">
    <property type="entry name" value="S1_IF2_alpha"/>
</dbReference>
<dbReference type="InterPro" id="IPR024055">
    <property type="entry name" value="TIF2_asu_C"/>
</dbReference>
<dbReference type="InterPro" id="IPR024054">
    <property type="entry name" value="TIF2_asu_middle_sf"/>
</dbReference>
<dbReference type="InterPro" id="IPR011488">
    <property type="entry name" value="TIF_2_asu"/>
</dbReference>
<dbReference type="PANTHER" id="PTHR10602">
    <property type="entry name" value="EUKARYOTIC TRANSLATION INITIATION FACTOR 2 SUBUNIT 1"/>
    <property type="match status" value="1"/>
</dbReference>
<dbReference type="PANTHER" id="PTHR10602:SF0">
    <property type="entry name" value="EUKARYOTIC TRANSLATION INITIATION FACTOR 2 SUBUNIT 1"/>
    <property type="match status" value="1"/>
</dbReference>
<dbReference type="Pfam" id="PF07541">
    <property type="entry name" value="EIF_2_alpha"/>
    <property type="match status" value="1"/>
</dbReference>
<dbReference type="Pfam" id="PF00575">
    <property type="entry name" value="S1"/>
    <property type="match status" value="1"/>
</dbReference>
<dbReference type="SMART" id="SM00316">
    <property type="entry name" value="S1"/>
    <property type="match status" value="1"/>
</dbReference>
<dbReference type="SUPFAM" id="SSF110993">
    <property type="entry name" value="eIF-2-alpha, C-terminal domain"/>
    <property type="match status" value="1"/>
</dbReference>
<dbReference type="SUPFAM" id="SSF116742">
    <property type="entry name" value="eIF2alpha middle domain-like"/>
    <property type="match status" value="1"/>
</dbReference>
<dbReference type="SUPFAM" id="SSF50249">
    <property type="entry name" value="Nucleic acid-binding proteins"/>
    <property type="match status" value="1"/>
</dbReference>
<dbReference type="PROSITE" id="PS50126">
    <property type="entry name" value="S1"/>
    <property type="match status" value="1"/>
</dbReference>